<sequence>MKDTVSQPAGGRGATAPRPADAASPSCGSSPSADSLSVVLAGGGTAGHVEPAMAVADALVALDPRVRITALGTPRGLETRLVPQRGYHLELITAVPMPRKPGGDLARLPSRVWRAVREARDVLDDVDADVVVGFGGYVALPAYLAARGLPLPPRRRRRIPVVIHEANARAGLANRVGAHTADRVLSAVPDSGLRRAEVVGVPVRASIAALDRAVLRAEARAHFGFPDDARVLLVFGGSQGAVSLNRAVSGAAADLAAAGVCVLHAHGPQNVLELRRRAQGDPPYVAVPYLDRMELAYAAADLVICRAGAMTVAEVSAVGLPAIYVPLPIGNGEQRLNALPVVNAGGGMVVADAALTPELVARQVAGLLTDPARLAAMTAAAARVGHRDAAGQVARAALAVATGAGARTTT</sequence>
<comment type="function">
    <text evidence="1">Cell wall formation. Catalyzes the transfer of a GlcNAc subunit on undecaprenyl-pyrophosphoryl-MurNAc-pentapeptide (lipid intermediate I) to form undecaprenyl-pyrophosphoryl-MurNAc-(pentapeptide)GlcNAc (lipid intermediate II).</text>
</comment>
<comment type="catalytic activity">
    <reaction evidence="1">
        <text>di-trans,octa-cis-undecaprenyl diphospho-N-acetyl-alpha-D-muramoyl-L-alanyl-D-glutamyl-meso-2,6-diaminopimeloyl-D-alanyl-D-alanine + UDP-N-acetyl-alpha-D-glucosamine = di-trans,octa-cis-undecaprenyl diphospho-[N-acetyl-alpha-D-glucosaminyl-(1-&gt;4)]-N-acetyl-alpha-D-muramoyl-L-alanyl-D-glutamyl-meso-2,6-diaminopimeloyl-D-alanyl-D-alanine + UDP + H(+)</text>
        <dbReference type="Rhea" id="RHEA:31227"/>
        <dbReference type="ChEBI" id="CHEBI:15378"/>
        <dbReference type="ChEBI" id="CHEBI:57705"/>
        <dbReference type="ChEBI" id="CHEBI:58223"/>
        <dbReference type="ChEBI" id="CHEBI:61387"/>
        <dbReference type="ChEBI" id="CHEBI:61388"/>
        <dbReference type="EC" id="2.4.1.227"/>
    </reaction>
</comment>
<comment type="pathway">
    <text evidence="1">Cell wall biogenesis; peptidoglycan biosynthesis.</text>
</comment>
<comment type="subcellular location">
    <subcellularLocation>
        <location evidence="1">Cell membrane</location>
        <topology evidence="1">Peripheral membrane protein</topology>
        <orientation evidence="1">Cytoplasmic side</orientation>
    </subcellularLocation>
</comment>
<comment type="similarity">
    <text evidence="1">Belongs to the glycosyltransferase 28 family. MurG subfamily.</text>
</comment>
<gene>
    <name evidence="1" type="primary">murG</name>
    <name type="ordered locus">BQ2027_MB2177C</name>
</gene>
<feature type="chain" id="PRO_0000109187" description="UDP-N-acetylglucosamine--N-acetylmuramyl-(pentapeptide) pyrophosphoryl-undecaprenol N-acetylglucosamine transferase">
    <location>
        <begin position="1"/>
        <end position="410"/>
    </location>
</feature>
<feature type="region of interest" description="Disordered" evidence="2">
    <location>
        <begin position="1"/>
        <end position="34"/>
    </location>
</feature>
<feature type="compositionally biased region" description="Low complexity" evidence="2">
    <location>
        <begin position="14"/>
        <end position="34"/>
    </location>
</feature>
<feature type="binding site" evidence="1">
    <location>
        <begin position="45"/>
        <end position="47"/>
    </location>
    <ligand>
        <name>UDP-N-acetyl-alpha-D-glucosamine</name>
        <dbReference type="ChEBI" id="CHEBI:57705"/>
    </ligand>
</feature>
<feature type="binding site" evidence="1">
    <location>
        <position position="167"/>
    </location>
    <ligand>
        <name>UDP-N-acetyl-alpha-D-glucosamine</name>
        <dbReference type="ChEBI" id="CHEBI:57705"/>
    </ligand>
</feature>
<feature type="binding site" evidence="1">
    <location>
        <position position="204"/>
    </location>
    <ligand>
        <name>UDP-N-acetyl-alpha-D-glucosamine</name>
        <dbReference type="ChEBI" id="CHEBI:57705"/>
    </ligand>
</feature>
<feature type="binding site" evidence="1">
    <location>
        <position position="238"/>
    </location>
    <ligand>
        <name>UDP-N-acetyl-alpha-D-glucosamine</name>
        <dbReference type="ChEBI" id="CHEBI:57705"/>
    </ligand>
</feature>
<feature type="binding site" evidence="1">
    <location>
        <position position="334"/>
    </location>
    <ligand>
        <name>UDP-N-acetyl-alpha-D-glucosamine</name>
        <dbReference type="ChEBI" id="CHEBI:57705"/>
    </ligand>
</feature>
<reference key="1">
    <citation type="journal article" date="2003" name="Proc. Natl. Acad. Sci. U.S.A.">
        <title>The complete genome sequence of Mycobacterium bovis.</title>
        <authorList>
            <person name="Garnier T."/>
            <person name="Eiglmeier K."/>
            <person name="Camus J.-C."/>
            <person name="Medina N."/>
            <person name="Mansoor H."/>
            <person name="Pryor M."/>
            <person name="Duthoy S."/>
            <person name="Grondin S."/>
            <person name="Lacroix C."/>
            <person name="Monsempe C."/>
            <person name="Simon S."/>
            <person name="Harris B."/>
            <person name="Atkin R."/>
            <person name="Doggett J."/>
            <person name="Mayes R."/>
            <person name="Keating L."/>
            <person name="Wheeler P.R."/>
            <person name="Parkhill J."/>
            <person name="Barrell B.G."/>
            <person name="Cole S.T."/>
            <person name="Gordon S.V."/>
            <person name="Hewinson R.G."/>
        </authorList>
    </citation>
    <scope>NUCLEOTIDE SEQUENCE [LARGE SCALE GENOMIC DNA]</scope>
    <source>
        <strain>ATCC BAA-935 / AF2122/97</strain>
    </source>
</reference>
<reference key="2">
    <citation type="journal article" date="2017" name="Genome Announc.">
        <title>Updated reference genome sequence and annotation of Mycobacterium bovis AF2122/97.</title>
        <authorList>
            <person name="Malone K.M."/>
            <person name="Farrell D."/>
            <person name="Stuber T.P."/>
            <person name="Schubert O.T."/>
            <person name="Aebersold R."/>
            <person name="Robbe-Austerman S."/>
            <person name="Gordon S.V."/>
        </authorList>
    </citation>
    <scope>NUCLEOTIDE SEQUENCE [LARGE SCALE GENOMIC DNA]</scope>
    <scope>GENOME REANNOTATION</scope>
    <source>
        <strain>ATCC BAA-935 / AF2122/97</strain>
    </source>
</reference>
<name>MURG_MYCBO</name>
<organism>
    <name type="scientific">Mycobacterium bovis (strain ATCC BAA-935 / AF2122/97)</name>
    <dbReference type="NCBI Taxonomy" id="233413"/>
    <lineage>
        <taxon>Bacteria</taxon>
        <taxon>Bacillati</taxon>
        <taxon>Actinomycetota</taxon>
        <taxon>Actinomycetes</taxon>
        <taxon>Mycobacteriales</taxon>
        <taxon>Mycobacteriaceae</taxon>
        <taxon>Mycobacterium</taxon>
        <taxon>Mycobacterium tuberculosis complex</taxon>
    </lineage>
</organism>
<dbReference type="EC" id="2.4.1.227" evidence="1"/>
<dbReference type="EMBL" id="LT708304">
    <property type="protein sequence ID" value="SIU00785.1"/>
    <property type="molecule type" value="Genomic_DNA"/>
</dbReference>
<dbReference type="RefSeq" id="NP_855826.1">
    <property type="nucleotide sequence ID" value="NC_002945.3"/>
</dbReference>
<dbReference type="RefSeq" id="WP_010950665.1">
    <property type="nucleotide sequence ID" value="NC_002945.4"/>
</dbReference>
<dbReference type="SMR" id="Q7VEP8"/>
<dbReference type="CAZy" id="GT28">
    <property type="family name" value="Glycosyltransferase Family 28"/>
</dbReference>
<dbReference type="KEGG" id="mbo:BQ2027_MB2177C"/>
<dbReference type="PATRIC" id="fig|233413.5.peg.2393"/>
<dbReference type="UniPathway" id="UPA00219"/>
<dbReference type="Proteomes" id="UP000001419">
    <property type="component" value="Chromosome"/>
</dbReference>
<dbReference type="GO" id="GO:0005886">
    <property type="term" value="C:plasma membrane"/>
    <property type="evidence" value="ECO:0007669"/>
    <property type="project" value="UniProtKB-SubCell"/>
</dbReference>
<dbReference type="GO" id="GO:0051991">
    <property type="term" value="F:UDP-N-acetyl-D-glucosamine:N-acetylmuramoyl-L-alanyl-D-glutamyl-meso-2,6-diaminopimelyl-D-alanyl-D-alanine-diphosphoundecaprenol 4-beta-N-acetylglucosaminlytransferase activity"/>
    <property type="evidence" value="ECO:0007669"/>
    <property type="project" value="RHEA"/>
</dbReference>
<dbReference type="GO" id="GO:0050511">
    <property type="term" value="F:undecaprenyldiphospho-muramoylpentapeptide beta-N-acetylglucosaminyltransferase activity"/>
    <property type="evidence" value="ECO:0007669"/>
    <property type="project" value="UniProtKB-UniRule"/>
</dbReference>
<dbReference type="GO" id="GO:0005975">
    <property type="term" value="P:carbohydrate metabolic process"/>
    <property type="evidence" value="ECO:0007669"/>
    <property type="project" value="InterPro"/>
</dbReference>
<dbReference type="GO" id="GO:0051301">
    <property type="term" value="P:cell division"/>
    <property type="evidence" value="ECO:0007669"/>
    <property type="project" value="UniProtKB-KW"/>
</dbReference>
<dbReference type="GO" id="GO:0071555">
    <property type="term" value="P:cell wall organization"/>
    <property type="evidence" value="ECO:0007669"/>
    <property type="project" value="UniProtKB-KW"/>
</dbReference>
<dbReference type="GO" id="GO:0030259">
    <property type="term" value="P:lipid glycosylation"/>
    <property type="evidence" value="ECO:0007669"/>
    <property type="project" value="UniProtKB-UniRule"/>
</dbReference>
<dbReference type="GO" id="GO:0009252">
    <property type="term" value="P:peptidoglycan biosynthetic process"/>
    <property type="evidence" value="ECO:0007669"/>
    <property type="project" value="UniProtKB-UniRule"/>
</dbReference>
<dbReference type="GO" id="GO:0008360">
    <property type="term" value="P:regulation of cell shape"/>
    <property type="evidence" value="ECO:0007669"/>
    <property type="project" value="UniProtKB-KW"/>
</dbReference>
<dbReference type="CDD" id="cd03785">
    <property type="entry name" value="GT28_MurG"/>
    <property type="match status" value="1"/>
</dbReference>
<dbReference type="Gene3D" id="3.40.50.2000">
    <property type="entry name" value="Glycogen Phosphorylase B"/>
    <property type="match status" value="2"/>
</dbReference>
<dbReference type="HAMAP" id="MF_00033">
    <property type="entry name" value="MurG"/>
    <property type="match status" value="1"/>
</dbReference>
<dbReference type="InterPro" id="IPR006009">
    <property type="entry name" value="GlcNAc_MurG"/>
</dbReference>
<dbReference type="InterPro" id="IPR007235">
    <property type="entry name" value="Glyco_trans_28_C"/>
</dbReference>
<dbReference type="InterPro" id="IPR004276">
    <property type="entry name" value="GlycoTrans_28_N"/>
</dbReference>
<dbReference type="NCBIfam" id="TIGR01133">
    <property type="entry name" value="murG"/>
    <property type="match status" value="1"/>
</dbReference>
<dbReference type="PANTHER" id="PTHR21015:SF22">
    <property type="entry name" value="GLYCOSYLTRANSFERASE"/>
    <property type="match status" value="1"/>
</dbReference>
<dbReference type="PANTHER" id="PTHR21015">
    <property type="entry name" value="UDP-N-ACETYLGLUCOSAMINE--N-ACETYLMURAMYL-(PENTAPEPTIDE) PYROPHOSPHORYL-UNDECAPRENOL N-ACETYLGLUCOSAMINE TRANSFERASE 1"/>
    <property type="match status" value="1"/>
</dbReference>
<dbReference type="Pfam" id="PF04101">
    <property type="entry name" value="Glyco_tran_28_C"/>
    <property type="match status" value="1"/>
</dbReference>
<dbReference type="Pfam" id="PF03033">
    <property type="entry name" value="Glyco_transf_28"/>
    <property type="match status" value="1"/>
</dbReference>
<dbReference type="SUPFAM" id="SSF53756">
    <property type="entry name" value="UDP-Glycosyltransferase/glycogen phosphorylase"/>
    <property type="match status" value="1"/>
</dbReference>
<proteinExistence type="inferred from homology"/>
<protein>
    <recommendedName>
        <fullName evidence="1">UDP-N-acetylglucosamine--N-acetylmuramyl-(pentapeptide) pyrophosphoryl-undecaprenol N-acetylglucosamine transferase</fullName>
        <ecNumber evidence="1">2.4.1.227</ecNumber>
    </recommendedName>
    <alternativeName>
        <fullName evidence="1">Undecaprenyl-PP-MurNAc-pentapeptide-UDPGlcNAc GlcNAc transferase</fullName>
    </alternativeName>
</protein>
<accession>Q7VEP8</accession>
<accession>A0A1R3Y146</accession>
<accession>X2BK91</accession>
<keyword id="KW-0131">Cell cycle</keyword>
<keyword id="KW-0132">Cell division</keyword>
<keyword id="KW-1003">Cell membrane</keyword>
<keyword id="KW-0133">Cell shape</keyword>
<keyword id="KW-0961">Cell wall biogenesis/degradation</keyword>
<keyword id="KW-0328">Glycosyltransferase</keyword>
<keyword id="KW-0472">Membrane</keyword>
<keyword id="KW-0573">Peptidoglycan synthesis</keyword>
<keyword id="KW-1185">Reference proteome</keyword>
<keyword id="KW-0808">Transferase</keyword>
<evidence type="ECO:0000255" key="1">
    <source>
        <dbReference type="HAMAP-Rule" id="MF_00033"/>
    </source>
</evidence>
<evidence type="ECO:0000256" key="2">
    <source>
        <dbReference type="SAM" id="MobiDB-lite"/>
    </source>
</evidence>